<keyword id="KW-0131">Cell cycle</keyword>
<keyword id="KW-0132">Cell division</keyword>
<keyword id="KW-0133">Cell shape</keyword>
<keyword id="KW-0175">Coiled coil</keyword>
<keyword id="KW-0963">Cytoplasm</keyword>
<protein>
    <recommendedName>
        <fullName evidence="1">Cell cycle protein GpsB</fullName>
    </recommendedName>
    <alternativeName>
        <fullName evidence="1">Guiding PBP1-shuttling protein</fullName>
    </alternativeName>
</protein>
<gene>
    <name evidence="1" type="primary">gpsB</name>
    <name type="ordered locus">BCAH820_1653</name>
</gene>
<name>GPSB_BACC0</name>
<dbReference type="EMBL" id="CP001283">
    <property type="protein sequence ID" value="ACK88051.1"/>
    <property type="molecule type" value="Genomic_DNA"/>
</dbReference>
<dbReference type="RefSeq" id="WP_000622430.1">
    <property type="nucleotide sequence ID" value="NC_011773.1"/>
</dbReference>
<dbReference type="SMR" id="B7JHS6"/>
<dbReference type="GeneID" id="93009481"/>
<dbReference type="KEGG" id="bcu:BCAH820_1653"/>
<dbReference type="HOGENOM" id="CLU_140309_1_0_9"/>
<dbReference type="Proteomes" id="UP000001363">
    <property type="component" value="Chromosome"/>
</dbReference>
<dbReference type="GO" id="GO:0005737">
    <property type="term" value="C:cytoplasm"/>
    <property type="evidence" value="ECO:0007669"/>
    <property type="project" value="UniProtKB-SubCell"/>
</dbReference>
<dbReference type="GO" id="GO:0051301">
    <property type="term" value="P:cell division"/>
    <property type="evidence" value="ECO:0007669"/>
    <property type="project" value="UniProtKB-UniRule"/>
</dbReference>
<dbReference type="GO" id="GO:0008360">
    <property type="term" value="P:regulation of cell shape"/>
    <property type="evidence" value="ECO:0007669"/>
    <property type="project" value="UniProtKB-UniRule"/>
</dbReference>
<dbReference type="Gene3D" id="6.10.250.660">
    <property type="match status" value="1"/>
</dbReference>
<dbReference type="HAMAP" id="MF_02011">
    <property type="entry name" value="GpsB"/>
    <property type="match status" value="1"/>
</dbReference>
<dbReference type="InterPro" id="IPR011229">
    <property type="entry name" value="Cell_cycle_GpsB"/>
</dbReference>
<dbReference type="InterPro" id="IPR019933">
    <property type="entry name" value="DivIVA_domain"/>
</dbReference>
<dbReference type="InterPro" id="IPR007793">
    <property type="entry name" value="DivIVA_fam"/>
</dbReference>
<dbReference type="NCBIfam" id="TIGR03544">
    <property type="entry name" value="DivI1A_domain"/>
    <property type="match status" value="1"/>
</dbReference>
<dbReference type="NCBIfam" id="NF010725">
    <property type="entry name" value="PRK14127.1"/>
    <property type="match status" value="1"/>
</dbReference>
<dbReference type="PANTHER" id="PTHR35794:SF1">
    <property type="entry name" value="CELL CYCLE PROTEIN GPSB"/>
    <property type="match status" value="1"/>
</dbReference>
<dbReference type="PANTHER" id="PTHR35794">
    <property type="entry name" value="CELL DIVISION PROTEIN DIVIVA"/>
    <property type="match status" value="1"/>
</dbReference>
<dbReference type="Pfam" id="PF05103">
    <property type="entry name" value="DivIVA"/>
    <property type="match status" value="1"/>
</dbReference>
<dbReference type="PIRSF" id="PIRSF029938">
    <property type="entry name" value="UCP029938"/>
    <property type="match status" value="1"/>
</dbReference>
<accession>B7JHS6</accession>
<comment type="function">
    <text evidence="1">Divisome component that associates with the complex late in its assembly, after the Z-ring is formed, and is dependent on DivIC and PBP2B for its recruitment to the divisome. Together with EzrA, is a key component of the system that regulates PBP1 localization during cell cycle progression. Its main role could be the removal of PBP1 from the cell pole after pole maturation is completed. Also contributes to the recruitment of PBP1 to the division complex. Not essential for septum formation.</text>
</comment>
<comment type="subunit">
    <text evidence="1">Forms polymers through the coiled coil domains. Interacts with PBP1, MreC and EzrA.</text>
</comment>
<comment type="subcellular location">
    <subcellularLocation>
        <location evidence="1">Cytoplasm</location>
    </subcellularLocation>
    <text evidence="1">Shuttles between the lateral wall and the division site in a cell cycle-dependent manner.</text>
</comment>
<comment type="similarity">
    <text evidence="1">Belongs to the GpsB family.</text>
</comment>
<feature type="chain" id="PRO_1000189488" description="Cell cycle protein GpsB">
    <location>
        <begin position="1"/>
        <end position="112"/>
    </location>
</feature>
<feature type="coiled-coil region" evidence="1">
    <location>
        <begin position="38"/>
        <end position="72"/>
    </location>
</feature>
<organism>
    <name type="scientific">Bacillus cereus (strain AH820)</name>
    <dbReference type="NCBI Taxonomy" id="405535"/>
    <lineage>
        <taxon>Bacteria</taxon>
        <taxon>Bacillati</taxon>
        <taxon>Bacillota</taxon>
        <taxon>Bacilli</taxon>
        <taxon>Bacillales</taxon>
        <taxon>Bacillaceae</taxon>
        <taxon>Bacillus</taxon>
        <taxon>Bacillus cereus group</taxon>
    </lineage>
</organism>
<evidence type="ECO:0000255" key="1">
    <source>
        <dbReference type="HAMAP-Rule" id="MF_02011"/>
    </source>
</evidence>
<proteinExistence type="inferred from homology"/>
<sequence>MISDKIKLTAKDILEKEFKTGMRGYQQEEVDKFLDMIIKDYEAFHKEFEQLKQQNARLKRELEEQKLAATQVPQQPVVQTPVAQPVYNNTNTDILKRLSNLEKAVFGSKLYE</sequence>
<reference key="1">
    <citation type="submission" date="2008-10" db="EMBL/GenBank/DDBJ databases">
        <title>Genome sequence of Bacillus cereus AH820.</title>
        <authorList>
            <person name="Dodson R.J."/>
            <person name="Durkin A.S."/>
            <person name="Rosovitz M.J."/>
            <person name="Rasko D.A."/>
            <person name="Hoffmaster A."/>
            <person name="Ravel J."/>
            <person name="Sutton G."/>
        </authorList>
    </citation>
    <scope>NUCLEOTIDE SEQUENCE [LARGE SCALE GENOMIC DNA]</scope>
    <source>
        <strain>AH820</strain>
    </source>
</reference>